<organism>
    <name type="scientific">Xenopus tropicalis</name>
    <name type="common">Western clawed frog</name>
    <name type="synonym">Silurana tropicalis</name>
    <dbReference type="NCBI Taxonomy" id="8364"/>
    <lineage>
        <taxon>Eukaryota</taxon>
        <taxon>Metazoa</taxon>
        <taxon>Chordata</taxon>
        <taxon>Craniata</taxon>
        <taxon>Vertebrata</taxon>
        <taxon>Euteleostomi</taxon>
        <taxon>Amphibia</taxon>
        <taxon>Batrachia</taxon>
        <taxon>Anura</taxon>
        <taxon>Pipoidea</taxon>
        <taxon>Pipidae</taxon>
        <taxon>Xenopodinae</taxon>
        <taxon>Xenopus</taxon>
        <taxon>Silurana</taxon>
    </lineage>
</organism>
<keyword id="KW-0067">ATP-binding</keyword>
<keyword id="KW-0418">Kinase</keyword>
<keyword id="KW-0496">Mitochondrion</keyword>
<keyword id="KW-0520">NAD</keyword>
<keyword id="KW-0521">NADP</keyword>
<keyword id="KW-0547">Nucleotide-binding</keyword>
<keyword id="KW-1185">Reference proteome</keyword>
<keyword id="KW-0808">Transferase</keyword>
<keyword id="KW-0809">Transit peptide</keyword>
<gene>
    <name type="primary">nadk2</name>
    <name type="synonym">nadkd1</name>
</gene>
<comment type="function">
    <text evidence="1">Mitochondrial NAD(+) kinase that phosphorylates NAD(+) to yield NADP(+). Can use both ATP or inorganic polyphosphate as the phosphoryl donor (By similarity).</text>
</comment>
<comment type="catalytic activity">
    <reaction>
        <text>NAD(+) + ATP = ADP + NADP(+) + H(+)</text>
        <dbReference type="Rhea" id="RHEA:18629"/>
        <dbReference type="ChEBI" id="CHEBI:15378"/>
        <dbReference type="ChEBI" id="CHEBI:30616"/>
        <dbReference type="ChEBI" id="CHEBI:57540"/>
        <dbReference type="ChEBI" id="CHEBI:58349"/>
        <dbReference type="ChEBI" id="CHEBI:456216"/>
        <dbReference type="EC" id="2.7.1.23"/>
    </reaction>
</comment>
<comment type="subunit">
    <text evidence="1">Homodimer.</text>
</comment>
<comment type="subcellular location">
    <subcellularLocation>
        <location evidence="1">Mitochondrion</location>
    </subcellularLocation>
</comment>
<comment type="similarity">
    <text evidence="3">Belongs to the NAD kinase family.</text>
</comment>
<evidence type="ECO:0000250" key="1"/>
<evidence type="ECO:0000255" key="2"/>
<evidence type="ECO:0000305" key="3"/>
<protein>
    <recommendedName>
        <fullName>NAD kinase 2, mitochondrial</fullName>
        <ecNumber>2.7.1.23</ecNumber>
    </recommendedName>
    <alternativeName>
        <fullName>NAD kinase domain-containing protein 1, mitochondrial</fullName>
    </alternativeName>
</protein>
<accession>Q08CZ6</accession>
<sequence>MSLCLRLLCSVCGAAALRVPLGVSSLRALSGSAEGFRPARVAVVAKTTRYEFEQQRYRSSGLSEAELRDLLALKGSSYNGLLQRYNIHSENVEHIVQSLRKEGTDVRLVKRRDYDEETVRWADAIISAGGDGTMLLAASKVQDRFKPVIGVNTDPERSEGHLCLPVRYTWSFPEALQKLYRGEFRWQWRQRIRLYLEGTGINLTPVDLHEQQLSLEQHNKAHNSQLEQKSVAVSGPQLLPVRALNEVFIGESLSSRVNYKSCKPRFTFSLHRASYYEISVDDGPWEKQKSSGLNVCTGTGSKAWSYNINKMSSQSVEELLNIVRQHKSLNVSLDSDVIQRVTNAYNDSLVYNPEEPKMFFSVREPIANRVFSSSQQRGFTSKVCVRSRCWDACMVVDGGTSFEFNDGAIVSIVMDDQDALCTVLLDD</sequence>
<feature type="transit peptide" description="Mitochondrion" evidence="2">
    <location>
        <begin position="1"/>
        <end position="33"/>
    </location>
</feature>
<feature type="chain" id="PRO_0000296295" description="NAD kinase 2, mitochondrial">
    <location>
        <begin position="34"/>
        <end position="427"/>
    </location>
</feature>
<dbReference type="EC" id="2.7.1.23"/>
<dbReference type="EMBL" id="BC124020">
    <property type="protein sequence ID" value="AAI24021.1"/>
    <property type="molecule type" value="mRNA"/>
</dbReference>
<dbReference type="RefSeq" id="NP_001072687.1">
    <property type="nucleotide sequence ID" value="NM_001079219.1"/>
</dbReference>
<dbReference type="SMR" id="Q08CZ6"/>
<dbReference type="FunCoup" id="Q08CZ6">
    <property type="interactions" value="2117"/>
</dbReference>
<dbReference type="STRING" id="8364.ENSXETP00000013167"/>
<dbReference type="PaxDb" id="8364-ENSXETP00000010405"/>
<dbReference type="GeneID" id="780144"/>
<dbReference type="KEGG" id="xtr:780144"/>
<dbReference type="AGR" id="Xenbase:XB-GENE-991224"/>
<dbReference type="CTD" id="133686"/>
<dbReference type="Xenbase" id="XB-GENE-991224">
    <property type="gene designation" value="nadk2"/>
</dbReference>
<dbReference type="eggNOG" id="KOG4180">
    <property type="taxonomic scope" value="Eukaryota"/>
</dbReference>
<dbReference type="HOGENOM" id="CLU_039559_0_0_1"/>
<dbReference type="InParanoid" id="Q08CZ6"/>
<dbReference type="OMA" id="WHFNINK"/>
<dbReference type="OrthoDB" id="185618at2759"/>
<dbReference type="PhylomeDB" id="Q08CZ6"/>
<dbReference type="TreeFam" id="TF314077"/>
<dbReference type="Reactome" id="R-XTR-196807">
    <property type="pathway name" value="Nicotinate metabolism"/>
</dbReference>
<dbReference type="Proteomes" id="UP000008143">
    <property type="component" value="Chromosome 1"/>
</dbReference>
<dbReference type="Bgee" id="ENSXETG00000004798">
    <property type="expression patterns" value="Expressed in mesonephros and 14 other cell types or tissues"/>
</dbReference>
<dbReference type="ExpressionAtlas" id="Q08CZ6">
    <property type="expression patterns" value="baseline"/>
</dbReference>
<dbReference type="GO" id="GO:0005739">
    <property type="term" value="C:mitochondrion"/>
    <property type="evidence" value="ECO:0000250"/>
    <property type="project" value="UniProtKB"/>
</dbReference>
<dbReference type="GO" id="GO:0005524">
    <property type="term" value="F:ATP binding"/>
    <property type="evidence" value="ECO:0007669"/>
    <property type="project" value="UniProtKB-KW"/>
</dbReference>
<dbReference type="GO" id="GO:0003951">
    <property type="term" value="F:NAD+ kinase activity"/>
    <property type="evidence" value="ECO:0000250"/>
    <property type="project" value="UniProtKB"/>
</dbReference>
<dbReference type="GO" id="GO:0042803">
    <property type="term" value="F:protein homodimerization activity"/>
    <property type="evidence" value="ECO:0000250"/>
    <property type="project" value="UniProtKB"/>
</dbReference>
<dbReference type="GO" id="GO:0019674">
    <property type="term" value="P:NAD metabolic process"/>
    <property type="evidence" value="ECO:0000250"/>
    <property type="project" value="UniProtKB"/>
</dbReference>
<dbReference type="GO" id="GO:0006741">
    <property type="term" value="P:NADP biosynthetic process"/>
    <property type="evidence" value="ECO:0007669"/>
    <property type="project" value="InterPro"/>
</dbReference>
<dbReference type="Gene3D" id="3.40.50.10330">
    <property type="entry name" value="Probable inorganic polyphosphate/atp-NAD kinase, domain 1"/>
    <property type="match status" value="1"/>
</dbReference>
<dbReference type="Gene3D" id="2.60.200.30">
    <property type="entry name" value="Probable inorganic polyphosphate/atp-NAD kinase, domain 2"/>
    <property type="match status" value="1"/>
</dbReference>
<dbReference type="InterPro" id="IPR017438">
    <property type="entry name" value="ATP-NAD_kinase_N"/>
</dbReference>
<dbReference type="InterPro" id="IPR017437">
    <property type="entry name" value="ATP-NAD_kinase_PpnK-typ_C"/>
</dbReference>
<dbReference type="InterPro" id="IPR016064">
    <property type="entry name" value="NAD/diacylglycerol_kinase_sf"/>
</dbReference>
<dbReference type="InterPro" id="IPR002504">
    <property type="entry name" value="NADK"/>
</dbReference>
<dbReference type="InterPro" id="IPR012355">
    <property type="entry name" value="NADK2_mit"/>
</dbReference>
<dbReference type="PANTHER" id="PTHR13158">
    <property type="match status" value="1"/>
</dbReference>
<dbReference type="PANTHER" id="PTHR13158:SF5">
    <property type="entry name" value="NAD KINASE 2, MITOCHONDRIAL"/>
    <property type="match status" value="1"/>
</dbReference>
<dbReference type="Pfam" id="PF01513">
    <property type="entry name" value="NAD_kinase"/>
    <property type="match status" value="1"/>
</dbReference>
<dbReference type="PIRSF" id="PIRSF017565">
    <property type="entry name" value="Kin_ATP-NAD_euk"/>
    <property type="match status" value="1"/>
</dbReference>
<dbReference type="SUPFAM" id="SSF111331">
    <property type="entry name" value="NAD kinase/diacylglycerol kinase-like"/>
    <property type="match status" value="1"/>
</dbReference>
<reference key="1">
    <citation type="submission" date="2006-09" db="EMBL/GenBank/DDBJ databases">
        <authorList>
            <consortium name="NIH - Xenopus Gene Collection (XGC) project"/>
        </authorList>
    </citation>
    <scope>NUCLEOTIDE SEQUENCE [LARGE SCALE MRNA]</scope>
    <source>
        <strain>N6</strain>
        <tissue>Skeletal muscle</tissue>
    </source>
</reference>
<name>NADK2_XENTR</name>
<proteinExistence type="evidence at transcript level"/>